<gene>
    <name evidence="1" type="primary">groES</name>
    <name evidence="1" type="synonym">groS</name>
    <name type="synonym">hsp10</name>
    <name type="synonym">mopB</name>
</gene>
<accession>O33499</accession>
<reference key="1">
    <citation type="journal article" date="1997" name="FEMS Microbiol. Lett.">
        <title>Monoclonal antibody against species-specific epitope of Pseudomonas aeruginosa Hsp60 protein cross-reacts with Pseudomonas stutzeri and other Pseudomonas species.</title>
        <authorList>
            <person name="Lueneberg E."/>
            <person name="Mueller D."/>
            <person name="Steinmetz I."/>
            <person name="Frosch M."/>
        </authorList>
    </citation>
    <scope>NUCLEOTIDE SEQUENCE [GENOMIC DNA]</scope>
    <source>
        <strain>NCTC 11607 / HK 22</strain>
    </source>
</reference>
<evidence type="ECO:0000255" key="1">
    <source>
        <dbReference type="HAMAP-Rule" id="MF_00580"/>
    </source>
</evidence>
<evidence type="ECO:0000305" key="2"/>
<name>CH10_STUST</name>
<organism>
    <name type="scientific">Stutzerimonas stutzeri</name>
    <name type="common">Pseudomonas stutzeri</name>
    <dbReference type="NCBI Taxonomy" id="316"/>
    <lineage>
        <taxon>Bacteria</taxon>
        <taxon>Pseudomonadati</taxon>
        <taxon>Pseudomonadota</taxon>
        <taxon>Gammaproteobacteria</taxon>
        <taxon>Pseudomonadales</taxon>
        <taxon>Pseudomonadaceae</taxon>
        <taxon>Stutzerimonas</taxon>
    </lineage>
</organism>
<protein>
    <recommendedName>
        <fullName evidence="1">Co-chaperonin GroES</fullName>
    </recommendedName>
    <alternativeName>
        <fullName evidence="1">10 kDa chaperonin</fullName>
    </alternativeName>
    <alternativeName>
        <fullName evidence="1">Chaperonin-10</fullName>
        <shortName evidence="1">Cpn10</shortName>
    </alternativeName>
    <alternativeName>
        <fullName>Heat shock protein 10</fullName>
    </alternativeName>
</protein>
<proteinExistence type="inferred from homology"/>
<comment type="function">
    <text evidence="1">Together with the chaperonin GroEL, plays an essential role in assisting protein folding. The GroEL-GroES system forms a nano-cage that allows encapsulation of the non-native substrate proteins and provides a physical environment optimized to promote and accelerate protein folding. GroES binds to the apical surface of the GroEL ring, thereby capping the opening of the GroEL channel.</text>
</comment>
<comment type="subunit">
    <text evidence="1">Heptamer of 7 subunits arranged in a ring. Interacts with the chaperonin GroEL.</text>
</comment>
<comment type="subcellular location">
    <subcellularLocation>
        <location evidence="1">Cytoplasm</location>
    </subcellularLocation>
</comment>
<comment type="similarity">
    <text evidence="1 2">Belongs to the GroES chaperonin family.</text>
</comment>
<feature type="chain" id="PRO_0000174810" description="Co-chaperonin GroES">
    <location>
        <begin position="1"/>
        <end position="97"/>
    </location>
</feature>
<keyword id="KW-0143">Chaperone</keyword>
<keyword id="KW-0963">Cytoplasm</keyword>
<sequence>MKLRPLHDRVVIRRSEEETKTAGGIVLPGSAAEKPNRGEVVAVGTGRVLDNGEVRALAVKVGDKVVFGPYSGSNTVKVDGEDLLVMSENEILAVVEA</sequence>
<dbReference type="EMBL" id="Y13828">
    <property type="protein sequence ID" value="CAA74153.1"/>
    <property type="molecule type" value="Genomic_DNA"/>
</dbReference>
<dbReference type="RefSeq" id="WP_003294630.1">
    <property type="nucleotide sequence ID" value="NZ_WIFX01000010.1"/>
</dbReference>
<dbReference type="SMR" id="O33499"/>
<dbReference type="eggNOG" id="COG0234">
    <property type="taxonomic scope" value="Bacteria"/>
</dbReference>
<dbReference type="OrthoDB" id="9806791at2"/>
<dbReference type="GO" id="GO:0005737">
    <property type="term" value="C:cytoplasm"/>
    <property type="evidence" value="ECO:0007669"/>
    <property type="project" value="UniProtKB-SubCell"/>
</dbReference>
<dbReference type="GO" id="GO:0005524">
    <property type="term" value="F:ATP binding"/>
    <property type="evidence" value="ECO:0007669"/>
    <property type="project" value="InterPro"/>
</dbReference>
<dbReference type="GO" id="GO:0046872">
    <property type="term" value="F:metal ion binding"/>
    <property type="evidence" value="ECO:0007669"/>
    <property type="project" value="TreeGrafter"/>
</dbReference>
<dbReference type="GO" id="GO:0044183">
    <property type="term" value="F:protein folding chaperone"/>
    <property type="evidence" value="ECO:0007669"/>
    <property type="project" value="InterPro"/>
</dbReference>
<dbReference type="GO" id="GO:0051087">
    <property type="term" value="F:protein-folding chaperone binding"/>
    <property type="evidence" value="ECO:0007669"/>
    <property type="project" value="TreeGrafter"/>
</dbReference>
<dbReference type="GO" id="GO:0051082">
    <property type="term" value="F:unfolded protein binding"/>
    <property type="evidence" value="ECO:0007669"/>
    <property type="project" value="TreeGrafter"/>
</dbReference>
<dbReference type="GO" id="GO:0051085">
    <property type="term" value="P:chaperone cofactor-dependent protein refolding"/>
    <property type="evidence" value="ECO:0007669"/>
    <property type="project" value="TreeGrafter"/>
</dbReference>
<dbReference type="CDD" id="cd00320">
    <property type="entry name" value="cpn10"/>
    <property type="match status" value="1"/>
</dbReference>
<dbReference type="FunFam" id="2.30.33.40:FF:000001">
    <property type="entry name" value="10 kDa chaperonin"/>
    <property type="match status" value="1"/>
</dbReference>
<dbReference type="Gene3D" id="2.30.33.40">
    <property type="entry name" value="GroES chaperonin"/>
    <property type="match status" value="1"/>
</dbReference>
<dbReference type="HAMAP" id="MF_00580">
    <property type="entry name" value="CH10"/>
    <property type="match status" value="1"/>
</dbReference>
<dbReference type="InterPro" id="IPR020818">
    <property type="entry name" value="Chaperonin_GroES"/>
</dbReference>
<dbReference type="InterPro" id="IPR037124">
    <property type="entry name" value="Chaperonin_GroES_sf"/>
</dbReference>
<dbReference type="InterPro" id="IPR018369">
    <property type="entry name" value="Chaprnonin_Cpn10_CS"/>
</dbReference>
<dbReference type="InterPro" id="IPR011032">
    <property type="entry name" value="GroES-like_sf"/>
</dbReference>
<dbReference type="NCBIfam" id="NF001526">
    <property type="entry name" value="PRK00364.1-1"/>
    <property type="match status" value="1"/>
</dbReference>
<dbReference type="NCBIfam" id="NF001527">
    <property type="entry name" value="PRK00364.1-2"/>
    <property type="match status" value="1"/>
</dbReference>
<dbReference type="NCBIfam" id="NF001531">
    <property type="entry name" value="PRK00364.2-2"/>
    <property type="match status" value="1"/>
</dbReference>
<dbReference type="NCBIfam" id="NF001533">
    <property type="entry name" value="PRK00364.2-4"/>
    <property type="match status" value="1"/>
</dbReference>
<dbReference type="PANTHER" id="PTHR10772">
    <property type="entry name" value="10 KDA HEAT SHOCK PROTEIN"/>
    <property type="match status" value="1"/>
</dbReference>
<dbReference type="PANTHER" id="PTHR10772:SF58">
    <property type="entry name" value="CO-CHAPERONIN GROES"/>
    <property type="match status" value="1"/>
</dbReference>
<dbReference type="Pfam" id="PF00166">
    <property type="entry name" value="Cpn10"/>
    <property type="match status" value="1"/>
</dbReference>
<dbReference type="PRINTS" id="PR00297">
    <property type="entry name" value="CHAPERONIN10"/>
</dbReference>
<dbReference type="SMART" id="SM00883">
    <property type="entry name" value="Cpn10"/>
    <property type="match status" value="1"/>
</dbReference>
<dbReference type="SUPFAM" id="SSF50129">
    <property type="entry name" value="GroES-like"/>
    <property type="match status" value="1"/>
</dbReference>
<dbReference type="PROSITE" id="PS00681">
    <property type="entry name" value="CHAPERONINS_CPN10"/>
    <property type="match status" value="1"/>
</dbReference>